<sequence length="74" mass="8162">MFTMKKSLLLFFFLGTISLSLCQEERNADEDDGEMTEEEKRGILDTLKNLAKTAGKGILKSLVNTASCKLSGQC</sequence>
<comment type="function">
    <text evidence="1">Antimicrobial peptide.</text>
</comment>
<comment type="subcellular location">
    <subcellularLocation>
        <location>Secreted</location>
    </subcellularLocation>
</comment>
<comment type="tissue specificity">
    <text>Expressed by the skin glands.</text>
</comment>
<comment type="similarity">
    <text evidence="3">Belongs to the frog skin active peptide (FSAP) family. Brevinin subfamily.</text>
</comment>
<evidence type="ECO:0000250" key="1"/>
<evidence type="ECO:0000255" key="2"/>
<evidence type="ECO:0000305" key="3"/>
<organism>
    <name type="scientific">Rana temporaria</name>
    <name type="common">European common frog</name>
    <dbReference type="NCBI Taxonomy" id="8407"/>
    <lineage>
        <taxon>Eukaryota</taxon>
        <taxon>Metazoa</taxon>
        <taxon>Chordata</taxon>
        <taxon>Craniata</taxon>
        <taxon>Vertebrata</taxon>
        <taxon>Euteleostomi</taxon>
        <taxon>Amphibia</taxon>
        <taxon>Batrachia</taxon>
        <taxon>Anura</taxon>
        <taxon>Neobatrachia</taxon>
        <taxon>Ranoidea</taxon>
        <taxon>Ranidae</taxon>
        <taxon>Rana</taxon>
        <taxon>Rana</taxon>
    </lineage>
</organism>
<reference key="1">
    <citation type="submission" date="1999-11" db="EMBL/GenBank/DDBJ databases">
        <title>A cDNA clone encoding brevinin 2Ta from Rana temporaria.</title>
        <authorList>
            <person name="Simmaco M."/>
            <person name="Miele R."/>
            <person name="Mangoni M.L."/>
            <person name="Barra D."/>
        </authorList>
    </citation>
    <scope>NUCLEOTIDE SEQUENCE [MRNA]</scope>
    <source>
        <tissue>Skin</tissue>
    </source>
</reference>
<feature type="signal peptide" evidence="2">
    <location>
        <begin position="1"/>
        <end position="22"/>
    </location>
</feature>
<feature type="propeptide" id="PRO_0000003449">
    <location>
        <begin position="23"/>
        <end position="41"/>
    </location>
</feature>
<feature type="peptide" id="PRO_0000003450" description="Brevinin-2Ta">
    <location>
        <begin position="42"/>
        <end position="74"/>
    </location>
</feature>
<feature type="disulfide bond" evidence="1">
    <location>
        <begin position="68"/>
        <end position="74"/>
    </location>
</feature>
<dbReference type="EMBL" id="AJ251567">
    <property type="protein sequence ID" value="CAB61442.1"/>
    <property type="molecule type" value="mRNA"/>
</dbReference>
<dbReference type="SMR" id="P82268"/>
<dbReference type="GO" id="GO:0005576">
    <property type="term" value="C:extracellular region"/>
    <property type="evidence" value="ECO:0007669"/>
    <property type="project" value="UniProtKB-SubCell"/>
</dbReference>
<dbReference type="GO" id="GO:0042742">
    <property type="term" value="P:defense response to bacterium"/>
    <property type="evidence" value="ECO:0007669"/>
    <property type="project" value="UniProtKB-KW"/>
</dbReference>
<dbReference type="InterPro" id="IPR012521">
    <property type="entry name" value="Antimicrobial_frog_2"/>
</dbReference>
<dbReference type="InterPro" id="IPR004275">
    <property type="entry name" value="Frog_antimicrobial_propeptide"/>
</dbReference>
<dbReference type="Pfam" id="PF08023">
    <property type="entry name" value="Antimicrobial_2"/>
    <property type="match status" value="1"/>
</dbReference>
<dbReference type="Pfam" id="PF03032">
    <property type="entry name" value="FSAP_sig_propep"/>
    <property type="match status" value="1"/>
</dbReference>
<keyword id="KW-0878">Amphibian defense peptide</keyword>
<keyword id="KW-0044">Antibiotic</keyword>
<keyword id="KW-0929">Antimicrobial</keyword>
<keyword id="KW-0165">Cleavage on pair of basic residues</keyword>
<keyword id="KW-1015">Disulfide bond</keyword>
<keyword id="KW-0964">Secreted</keyword>
<keyword id="KW-0732">Signal</keyword>
<proteinExistence type="evidence at transcript level"/>
<accession>P82268</accession>
<protein>
    <recommendedName>
        <fullName>Brevinin-2Ta</fullName>
    </recommendedName>
</protein>
<name>BR2A_RANTE</name>